<reference key="1">
    <citation type="journal article" date="2004" name="Proc. Natl. Acad. Sci. U.S.A.">
        <title>Comparison of the genome of the oral pathogen Treponema denticola with other spirochete genomes.</title>
        <authorList>
            <person name="Seshadri R."/>
            <person name="Myers G.S.A."/>
            <person name="Tettelin H."/>
            <person name="Eisen J.A."/>
            <person name="Heidelberg J.F."/>
            <person name="Dodson R.J."/>
            <person name="Davidsen T.M."/>
            <person name="DeBoy R.T."/>
            <person name="Fouts D.E."/>
            <person name="Haft D.H."/>
            <person name="Selengut J."/>
            <person name="Ren Q."/>
            <person name="Brinkac L.M."/>
            <person name="Madupu R."/>
            <person name="Kolonay J.F."/>
            <person name="Durkin S.A."/>
            <person name="Daugherty S.C."/>
            <person name="Shetty J."/>
            <person name="Shvartsbeyn A."/>
            <person name="Gebregeorgis E."/>
            <person name="Geer K."/>
            <person name="Tsegaye G."/>
            <person name="Malek J.A."/>
            <person name="Ayodeji B."/>
            <person name="Shatsman S."/>
            <person name="McLeod M.P."/>
            <person name="Smajs D."/>
            <person name="Howell J.K."/>
            <person name="Pal S."/>
            <person name="Amin A."/>
            <person name="Vashisth P."/>
            <person name="McNeill T.Z."/>
            <person name="Xiang Q."/>
            <person name="Sodergren E."/>
            <person name="Baca E."/>
            <person name="Weinstock G.M."/>
            <person name="Norris S.J."/>
            <person name="Fraser C.M."/>
            <person name="Paulsen I.T."/>
        </authorList>
    </citation>
    <scope>NUCLEOTIDE SEQUENCE [LARGE SCALE GENOMIC DNA]</scope>
    <source>
        <strain>ATCC 35405 / DSM 14222 / CIP 103919 / JCM 8153 / KCTC 15104</strain>
    </source>
</reference>
<gene>
    <name evidence="1" type="primary">ispF</name>
    <name type="ordered locus">TDE_2292</name>
</gene>
<keyword id="KW-0414">Isoprene biosynthesis</keyword>
<keyword id="KW-0456">Lyase</keyword>
<keyword id="KW-0479">Metal-binding</keyword>
<keyword id="KW-1185">Reference proteome</keyword>
<feature type="chain" id="PRO_0000189513" description="2-C-methyl-D-erythritol 2,4-cyclodiphosphate synthase">
    <location>
        <begin position="1"/>
        <end position="161"/>
    </location>
</feature>
<feature type="binding site" evidence="1">
    <location>
        <begin position="8"/>
        <end position="10"/>
    </location>
    <ligand>
        <name>4-CDP-2-C-methyl-D-erythritol 2-phosphate</name>
        <dbReference type="ChEBI" id="CHEBI:57919"/>
    </ligand>
</feature>
<feature type="binding site" evidence="1">
    <location>
        <position position="8"/>
    </location>
    <ligand>
        <name>a divalent metal cation</name>
        <dbReference type="ChEBI" id="CHEBI:60240"/>
    </ligand>
</feature>
<feature type="binding site" evidence="1">
    <location>
        <position position="10"/>
    </location>
    <ligand>
        <name>a divalent metal cation</name>
        <dbReference type="ChEBI" id="CHEBI:60240"/>
    </ligand>
</feature>
<feature type="binding site" evidence="1">
    <location>
        <begin position="34"/>
        <end position="35"/>
    </location>
    <ligand>
        <name>4-CDP-2-C-methyl-D-erythritol 2-phosphate</name>
        <dbReference type="ChEBI" id="CHEBI:57919"/>
    </ligand>
</feature>
<feature type="binding site" evidence="1">
    <location>
        <position position="42"/>
    </location>
    <ligand>
        <name>a divalent metal cation</name>
        <dbReference type="ChEBI" id="CHEBI:60240"/>
    </ligand>
</feature>
<feature type="binding site" evidence="1">
    <location>
        <begin position="56"/>
        <end position="58"/>
    </location>
    <ligand>
        <name>4-CDP-2-C-methyl-D-erythritol 2-phosphate</name>
        <dbReference type="ChEBI" id="CHEBI:57919"/>
    </ligand>
</feature>
<feature type="binding site" evidence="1">
    <location>
        <position position="142"/>
    </location>
    <ligand>
        <name>4-CDP-2-C-methyl-D-erythritol 2-phosphate</name>
        <dbReference type="ChEBI" id="CHEBI:57919"/>
    </ligand>
</feature>
<feature type="site" description="Transition state stabilizer" evidence="1">
    <location>
        <position position="34"/>
    </location>
</feature>
<feature type="site" description="Transition state stabilizer" evidence="1">
    <location>
        <position position="133"/>
    </location>
</feature>
<accession>Q73KC6</accession>
<comment type="function">
    <text evidence="1">Involved in the biosynthesis of isopentenyl diphosphate (IPP) and dimethylallyl diphosphate (DMAPP), two major building blocks of isoprenoid compounds. Catalyzes the conversion of 4-diphosphocytidyl-2-C-methyl-D-erythritol 2-phosphate (CDP-ME2P) to 2-C-methyl-D-erythritol 2,4-cyclodiphosphate (ME-CPP) with a corresponding release of cytidine 5-monophosphate (CMP).</text>
</comment>
<comment type="catalytic activity">
    <reaction evidence="1">
        <text>4-CDP-2-C-methyl-D-erythritol 2-phosphate = 2-C-methyl-D-erythritol 2,4-cyclic diphosphate + CMP</text>
        <dbReference type="Rhea" id="RHEA:23864"/>
        <dbReference type="ChEBI" id="CHEBI:57919"/>
        <dbReference type="ChEBI" id="CHEBI:58483"/>
        <dbReference type="ChEBI" id="CHEBI:60377"/>
        <dbReference type="EC" id="4.6.1.12"/>
    </reaction>
</comment>
<comment type="cofactor">
    <cofactor evidence="1">
        <name>a divalent metal cation</name>
        <dbReference type="ChEBI" id="CHEBI:60240"/>
    </cofactor>
    <text evidence="1">Binds 1 divalent metal cation per subunit.</text>
</comment>
<comment type="pathway">
    <text evidence="1">Isoprenoid biosynthesis; isopentenyl diphosphate biosynthesis via DXP pathway; isopentenyl diphosphate from 1-deoxy-D-xylulose 5-phosphate: step 4/6.</text>
</comment>
<comment type="subunit">
    <text evidence="1">Homotrimer.</text>
</comment>
<comment type="similarity">
    <text evidence="1">Belongs to the IspF family.</text>
</comment>
<evidence type="ECO:0000255" key="1">
    <source>
        <dbReference type="HAMAP-Rule" id="MF_00107"/>
    </source>
</evidence>
<dbReference type="EC" id="4.6.1.12" evidence="1"/>
<dbReference type="EMBL" id="AE017226">
    <property type="protein sequence ID" value="AAS12811.1"/>
    <property type="molecule type" value="Genomic_DNA"/>
</dbReference>
<dbReference type="RefSeq" id="NP_972892.1">
    <property type="nucleotide sequence ID" value="NC_002967.9"/>
</dbReference>
<dbReference type="RefSeq" id="WP_002680204.1">
    <property type="nucleotide sequence ID" value="NC_002967.9"/>
</dbReference>
<dbReference type="SMR" id="Q73KC6"/>
<dbReference type="STRING" id="243275.TDE_2292"/>
<dbReference type="PaxDb" id="243275-TDE_2292"/>
<dbReference type="GeneID" id="2740257"/>
<dbReference type="KEGG" id="tde:TDE_2292"/>
<dbReference type="PATRIC" id="fig|243275.7.peg.2162"/>
<dbReference type="eggNOG" id="COG0245">
    <property type="taxonomic scope" value="Bacteria"/>
</dbReference>
<dbReference type="HOGENOM" id="CLU_084630_2_0_12"/>
<dbReference type="OrthoDB" id="9804336at2"/>
<dbReference type="UniPathway" id="UPA00056">
    <property type="reaction ID" value="UER00095"/>
</dbReference>
<dbReference type="Proteomes" id="UP000008212">
    <property type="component" value="Chromosome"/>
</dbReference>
<dbReference type="GO" id="GO:0008685">
    <property type="term" value="F:2-C-methyl-D-erythritol 2,4-cyclodiphosphate synthase activity"/>
    <property type="evidence" value="ECO:0007669"/>
    <property type="project" value="UniProtKB-UniRule"/>
</dbReference>
<dbReference type="GO" id="GO:0046872">
    <property type="term" value="F:metal ion binding"/>
    <property type="evidence" value="ECO:0007669"/>
    <property type="project" value="UniProtKB-KW"/>
</dbReference>
<dbReference type="GO" id="GO:0019288">
    <property type="term" value="P:isopentenyl diphosphate biosynthetic process, methylerythritol 4-phosphate pathway"/>
    <property type="evidence" value="ECO:0007669"/>
    <property type="project" value="UniProtKB-UniRule"/>
</dbReference>
<dbReference type="GO" id="GO:0016114">
    <property type="term" value="P:terpenoid biosynthetic process"/>
    <property type="evidence" value="ECO:0007669"/>
    <property type="project" value="InterPro"/>
</dbReference>
<dbReference type="CDD" id="cd00554">
    <property type="entry name" value="MECDP_synthase"/>
    <property type="match status" value="1"/>
</dbReference>
<dbReference type="Gene3D" id="3.30.1330.50">
    <property type="entry name" value="2-C-methyl-D-erythritol 2,4-cyclodiphosphate synthase"/>
    <property type="match status" value="1"/>
</dbReference>
<dbReference type="HAMAP" id="MF_00107">
    <property type="entry name" value="IspF"/>
    <property type="match status" value="1"/>
</dbReference>
<dbReference type="InterPro" id="IPR003526">
    <property type="entry name" value="MECDP_synthase"/>
</dbReference>
<dbReference type="InterPro" id="IPR020555">
    <property type="entry name" value="MECDP_synthase_CS"/>
</dbReference>
<dbReference type="InterPro" id="IPR036571">
    <property type="entry name" value="MECDP_synthase_sf"/>
</dbReference>
<dbReference type="NCBIfam" id="TIGR00151">
    <property type="entry name" value="ispF"/>
    <property type="match status" value="1"/>
</dbReference>
<dbReference type="PANTHER" id="PTHR43181">
    <property type="entry name" value="2-C-METHYL-D-ERYTHRITOL 2,4-CYCLODIPHOSPHATE SYNTHASE, CHLOROPLASTIC"/>
    <property type="match status" value="1"/>
</dbReference>
<dbReference type="PANTHER" id="PTHR43181:SF1">
    <property type="entry name" value="2-C-METHYL-D-ERYTHRITOL 2,4-CYCLODIPHOSPHATE SYNTHASE, CHLOROPLASTIC"/>
    <property type="match status" value="1"/>
</dbReference>
<dbReference type="Pfam" id="PF02542">
    <property type="entry name" value="YgbB"/>
    <property type="match status" value="1"/>
</dbReference>
<dbReference type="SUPFAM" id="SSF69765">
    <property type="entry name" value="IpsF-like"/>
    <property type="match status" value="1"/>
</dbReference>
<dbReference type="PROSITE" id="PS01350">
    <property type="entry name" value="ISPF"/>
    <property type="match status" value="1"/>
</dbReference>
<proteinExistence type="inferred from homology"/>
<protein>
    <recommendedName>
        <fullName evidence="1">2-C-methyl-D-erythritol 2,4-cyclodiphosphate synthase</fullName>
        <shortName evidence="1">MECDP-synthase</shortName>
        <shortName evidence="1">MECPP-synthase</shortName>
        <shortName evidence="1">MECPS</shortName>
        <ecNumber evidence="1">4.6.1.12</ecNumber>
    </recommendedName>
</protein>
<name>ISPF_TREDE</name>
<sequence>MRTGLGYDLHRLVRGKKLMMGGVHIPFKKGEKAHSDGDVLLHAITDALLGACGMGDIGEFFPPSDKKWKDANSSELLSTVWERISEAGWKIQNIDCVIIIEEPKILPFREEIRKSIAGILKIEKEQIFIKAKTGEGIGIIGRGKAVAALASCLIFCRHTQE</sequence>
<organism>
    <name type="scientific">Treponema denticola (strain ATCC 35405 / DSM 14222 / CIP 103919 / JCM 8153 / KCTC 15104)</name>
    <dbReference type="NCBI Taxonomy" id="243275"/>
    <lineage>
        <taxon>Bacteria</taxon>
        <taxon>Pseudomonadati</taxon>
        <taxon>Spirochaetota</taxon>
        <taxon>Spirochaetia</taxon>
        <taxon>Spirochaetales</taxon>
        <taxon>Treponemataceae</taxon>
        <taxon>Treponema</taxon>
    </lineage>
</organism>